<proteinExistence type="inferred from homology"/>
<protein>
    <recommendedName>
        <fullName evidence="1">Putative membrane protein insertion efficiency factor</fullName>
    </recommendedName>
</protein>
<feature type="chain" id="PRO_0000171798" description="Putative membrane protein insertion efficiency factor">
    <location>
        <begin position="1"/>
        <end position="90"/>
    </location>
</feature>
<gene>
    <name type="ordered locus">BPP4404</name>
</gene>
<dbReference type="EMBL" id="BX640436">
    <property type="protein sequence ID" value="CAE39683.1"/>
    <property type="molecule type" value="Genomic_DNA"/>
</dbReference>
<dbReference type="KEGG" id="bpa:BPP4404"/>
<dbReference type="HOGENOM" id="CLU_144811_2_2_4"/>
<dbReference type="Proteomes" id="UP000001421">
    <property type="component" value="Chromosome"/>
</dbReference>
<dbReference type="GO" id="GO:0005886">
    <property type="term" value="C:plasma membrane"/>
    <property type="evidence" value="ECO:0007669"/>
    <property type="project" value="UniProtKB-SubCell"/>
</dbReference>
<dbReference type="HAMAP" id="MF_00386">
    <property type="entry name" value="UPF0161_YidD"/>
    <property type="match status" value="1"/>
</dbReference>
<dbReference type="InterPro" id="IPR002696">
    <property type="entry name" value="Membr_insert_effic_factor_YidD"/>
</dbReference>
<dbReference type="NCBIfam" id="TIGR00278">
    <property type="entry name" value="membrane protein insertion efficiency factor YidD"/>
    <property type="match status" value="1"/>
</dbReference>
<dbReference type="PANTHER" id="PTHR33383">
    <property type="entry name" value="MEMBRANE PROTEIN INSERTION EFFICIENCY FACTOR-RELATED"/>
    <property type="match status" value="1"/>
</dbReference>
<dbReference type="PANTHER" id="PTHR33383:SF1">
    <property type="entry name" value="MEMBRANE PROTEIN INSERTION EFFICIENCY FACTOR-RELATED"/>
    <property type="match status" value="1"/>
</dbReference>
<dbReference type="Pfam" id="PF01809">
    <property type="entry name" value="YidD"/>
    <property type="match status" value="1"/>
</dbReference>
<dbReference type="SMART" id="SM01234">
    <property type="entry name" value="Haemolytic"/>
    <property type="match status" value="1"/>
</dbReference>
<accession>Q7W2K2</accession>
<reference key="1">
    <citation type="journal article" date="2003" name="Nat. Genet.">
        <title>Comparative analysis of the genome sequences of Bordetella pertussis, Bordetella parapertussis and Bordetella bronchiseptica.</title>
        <authorList>
            <person name="Parkhill J."/>
            <person name="Sebaihia M."/>
            <person name="Preston A."/>
            <person name="Murphy L.D."/>
            <person name="Thomson N.R."/>
            <person name="Harris D.E."/>
            <person name="Holden M.T.G."/>
            <person name="Churcher C.M."/>
            <person name="Bentley S.D."/>
            <person name="Mungall K.L."/>
            <person name="Cerdeno-Tarraga A.-M."/>
            <person name="Temple L."/>
            <person name="James K.D."/>
            <person name="Harris B."/>
            <person name="Quail M.A."/>
            <person name="Achtman M."/>
            <person name="Atkin R."/>
            <person name="Baker S."/>
            <person name="Basham D."/>
            <person name="Bason N."/>
            <person name="Cherevach I."/>
            <person name="Chillingworth T."/>
            <person name="Collins M."/>
            <person name="Cronin A."/>
            <person name="Davis P."/>
            <person name="Doggett J."/>
            <person name="Feltwell T."/>
            <person name="Goble A."/>
            <person name="Hamlin N."/>
            <person name="Hauser H."/>
            <person name="Holroyd S."/>
            <person name="Jagels K."/>
            <person name="Leather S."/>
            <person name="Moule S."/>
            <person name="Norberczak H."/>
            <person name="O'Neil S."/>
            <person name="Ormond D."/>
            <person name="Price C."/>
            <person name="Rabbinowitsch E."/>
            <person name="Rutter S."/>
            <person name="Sanders M."/>
            <person name="Saunders D."/>
            <person name="Seeger K."/>
            <person name="Sharp S."/>
            <person name="Simmonds M."/>
            <person name="Skelton J."/>
            <person name="Squares R."/>
            <person name="Squares S."/>
            <person name="Stevens K."/>
            <person name="Unwin L."/>
            <person name="Whitehead S."/>
            <person name="Barrell B.G."/>
            <person name="Maskell D.J."/>
        </authorList>
    </citation>
    <scope>NUCLEOTIDE SEQUENCE [LARGE SCALE GENOMIC DNA]</scope>
    <source>
        <strain>12822 / ATCC BAA-587 / NCTC 13253</strain>
    </source>
</reference>
<name>YIDD_BORPA</name>
<sequence>MIRRLLIAPIRFYRYFLSPWVGRQCRFTPTCSAYAIEAIERHGAWRGLWLAARRIGRCHPWSPGGYDPVPPGHGAGAQACCAHRHRTEPD</sequence>
<keyword id="KW-0997">Cell inner membrane</keyword>
<keyword id="KW-1003">Cell membrane</keyword>
<keyword id="KW-0472">Membrane</keyword>
<comment type="function">
    <text evidence="1">Could be involved in insertion of integral membrane proteins into the membrane.</text>
</comment>
<comment type="subcellular location">
    <subcellularLocation>
        <location evidence="1">Cell inner membrane</location>
        <topology evidence="1">Peripheral membrane protein</topology>
        <orientation evidence="1">Cytoplasmic side</orientation>
    </subcellularLocation>
</comment>
<comment type="similarity">
    <text evidence="1">Belongs to the UPF0161 family.</text>
</comment>
<organism>
    <name type="scientific">Bordetella parapertussis (strain 12822 / ATCC BAA-587 / NCTC 13253)</name>
    <dbReference type="NCBI Taxonomy" id="257311"/>
    <lineage>
        <taxon>Bacteria</taxon>
        <taxon>Pseudomonadati</taxon>
        <taxon>Pseudomonadota</taxon>
        <taxon>Betaproteobacteria</taxon>
        <taxon>Burkholderiales</taxon>
        <taxon>Alcaligenaceae</taxon>
        <taxon>Bordetella</taxon>
    </lineage>
</organism>
<evidence type="ECO:0000255" key="1">
    <source>
        <dbReference type="HAMAP-Rule" id="MF_00386"/>
    </source>
</evidence>